<reference key="1">
    <citation type="submission" date="2003-07" db="EMBL/GenBank/DDBJ databases">
        <authorList>
            <consortium name="NIH - Zebrafish Gene Collection (ZGC) project"/>
        </authorList>
    </citation>
    <scope>NUCLEOTIDE SEQUENCE [LARGE SCALE MRNA]</scope>
    <source>
        <strain>AB</strain>
    </source>
</reference>
<reference key="2">
    <citation type="journal article" date="2009" name="Cell Metab.">
        <title>Discovery of genes essential for heme biosynthesis through large-scale gene expression analysis.</title>
        <authorList>
            <person name="Nilsson R."/>
            <person name="Schultz I.J."/>
            <person name="Pierce E.L."/>
            <person name="Soltis K.A."/>
            <person name="Naranuntarat A."/>
            <person name="Ward D.M."/>
            <person name="Baughman J.M."/>
            <person name="Paradkar P.N."/>
            <person name="Kingsley P.D."/>
            <person name="Culotta V.C."/>
            <person name="Kaplan J."/>
            <person name="Palis J."/>
            <person name="Paw B.H."/>
            <person name="Mootha V.K."/>
        </authorList>
    </citation>
    <scope>FUNCTION</scope>
    <scope>DISRUPTION PHENOTYPE</scope>
</reference>
<accession>Q7SXW0</accession>
<dbReference type="EMBL" id="BC055226">
    <property type="protein sequence ID" value="AAH55226.1"/>
    <property type="molecule type" value="mRNA"/>
</dbReference>
<dbReference type="RefSeq" id="NP_956780.1">
    <property type="nucleotide sequence ID" value="NM_200486.1"/>
</dbReference>
<dbReference type="SMR" id="Q7SXW0"/>
<dbReference type="FunCoup" id="Q7SXW0">
    <property type="interactions" value="2066"/>
</dbReference>
<dbReference type="STRING" id="7955.ENSDARP00000005911"/>
<dbReference type="PaxDb" id="7955-ENSDARP00000005911"/>
<dbReference type="GeneID" id="393458"/>
<dbReference type="KEGG" id="dre:393458"/>
<dbReference type="AGR" id="ZFIN:ZDB-GENE-040426-1250"/>
<dbReference type="CTD" id="51629"/>
<dbReference type="ZFIN" id="ZDB-GENE-040426-1250">
    <property type="gene designation" value="slc25a39"/>
</dbReference>
<dbReference type="eggNOG" id="KOG0761">
    <property type="taxonomic scope" value="Eukaryota"/>
</dbReference>
<dbReference type="InParanoid" id="Q7SXW0"/>
<dbReference type="OrthoDB" id="1747031at2759"/>
<dbReference type="PhylomeDB" id="Q7SXW0"/>
<dbReference type="PRO" id="PR:Q7SXW0"/>
<dbReference type="Proteomes" id="UP000000437">
    <property type="component" value="Chromosome 3"/>
</dbReference>
<dbReference type="GO" id="GO:0005743">
    <property type="term" value="C:mitochondrial inner membrane"/>
    <property type="evidence" value="ECO:0007669"/>
    <property type="project" value="UniProtKB-SubCell"/>
</dbReference>
<dbReference type="GO" id="GO:0005739">
    <property type="term" value="C:mitochondrion"/>
    <property type="evidence" value="ECO:0000250"/>
    <property type="project" value="ZFIN"/>
</dbReference>
<dbReference type="GO" id="GO:0051537">
    <property type="term" value="F:2 iron, 2 sulfur cluster binding"/>
    <property type="evidence" value="ECO:0000250"/>
    <property type="project" value="UniProtKB"/>
</dbReference>
<dbReference type="GO" id="GO:0046872">
    <property type="term" value="F:metal ion binding"/>
    <property type="evidence" value="ECO:0007669"/>
    <property type="project" value="UniProtKB-KW"/>
</dbReference>
<dbReference type="GO" id="GO:0016530">
    <property type="term" value="F:metallochaperone activity"/>
    <property type="evidence" value="ECO:0000250"/>
    <property type="project" value="ZFIN"/>
</dbReference>
<dbReference type="GO" id="GO:0160007">
    <property type="term" value="P:glutathione import into mitochondrion"/>
    <property type="evidence" value="ECO:0000250"/>
    <property type="project" value="UniProtKB"/>
</dbReference>
<dbReference type="GO" id="GO:0006783">
    <property type="term" value="P:heme biosynthetic process"/>
    <property type="evidence" value="ECO:0000315"/>
    <property type="project" value="ZFIN"/>
</dbReference>
<dbReference type="GO" id="GO:0170036">
    <property type="term" value="P:import into the mitochondrion"/>
    <property type="evidence" value="ECO:0000318"/>
    <property type="project" value="GO_Central"/>
</dbReference>
<dbReference type="GO" id="GO:0006828">
    <property type="term" value="P:manganese ion transport"/>
    <property type="evidence" value="ECO:0000250"/>
    <property type="project" value="ZFIN"/>
</dbReference>
<dbReference type="Gene3D" id="1.50.40.10">
    <property type="entry name" value="Mitochondrial carrier domain"/>
    <property type="match status" value="2"/>
</dbReference>
<dbReference type="InterPro" id="IPR002067">
    <property type="entry name" value="Mit_carrier"/>
</dbReference>
<dbReference type="InterPro" id="IPR018108">
    <property type="entry name" value="Mitochondrial_sb/sol_carrier"/>
</dbReference>
<dbReference type="InterPro" id="IPR023395">
    <property type="entry name" value="Mt_carrier_dom_sf"/>
</dbReference>
<dbReference type="InterPro" id="IPR045315">
    <property type="entry name" value="Mtm1-like"/>
</dbReference>
<dbReference type="PANTHER" id="PTHR45760">
    <property type="entry name" value="FI19922P1-RELATED"/>
    <property type="match status" value="1"/>
</dbReference>
<dbReference type="PANTHER" id="PTHR45760:SF1">
    <property type="entry name" value="MITOCHONDRIAL GLUTATHIONE TRANSPORTER SLC25A39-RELATED"/>
    <property type="match status" value="1"/>
</dbReference>
<dbReference type="Pfam" id="PF00153">
    <property type="entry name" value="Mito_carr"/>
    <property type="match status" value="4"/>
</dbReference>
<dbReference type="PRINTS" id="PR00926">
    <property type="entry name" value="MITOCARRIER"/>
</dbReference>
<dbReference type="SUPFAM" id="SSF103506">
    <property type="entry name" value="Mitochondrial carrier"/>
    <property type="match status" value="1"/>
</dbReference>
<dbReference type="PROSITE" id="PS50920">
    <property type="entry name" value="SOLCAR"/>
    <property type="match status" value="3"/>
</dbReference>
<gene>
    <name type="primary">slc25a39</name>
    <name type="ORF">zgc:63736</name>
</gene>
<sequence length="359" mass="40113">MGDRPAVRISAAITPVQQMLASGTGAVLTSLFVTPLDVVKIRLQAQQTPLFQAIAAESRPWFRVTRPSKWKCFLYCNGLMDHVYVCQNMSSCSNLYKTSTHFSGTLDAFVKITHNEGLRSLWSGLPPTLVMAVPATVIYFTCYDQLRDFLCYSMGYHGDHIPLIAGGLARLGAVSVISPLELVRTKMQSRRLQYSELMVCIRSSVAQDGWLSLWRGWGPTVLRDVPFSALYWFNYELVKAQLCEHYRTPQASFTISFTAGAVSGAIAAVLTLPFDVVKTRRQIQLGEMEALGAVSMKKPSSTWNMMRNIWIDMGYKGLFAGFLPRVIKVAPACAVMISTYEFGKTFFQERNLHQARCGL</sequence>
<organism>
    <name type="scientific">Danio rerio</name>
    <name type="common">Zebrafish</name>
    <name type="synonym">Brachydanio rerio</name>
    <dbReference type="NCBI Taxonomy" id="7955"/>
    <lineage>
        <taxon>Eukaryota</taxon>
        <taxon>Metazoa</taxon>
        <taxon>Chordata</taxon>
        <taxon>Craniata</taxon>
        <taxon>Vertebrata</taxon>
        <taxon>Euteleostomi</taxon>
        <taxon>Actinopterygii</taxon>
        <taxon>Neopterygii</taxon>
        <taxon>Teleostei</taxon>
        <taxon>Ostariophysi</taxon>
        <taxon>Cypriniformes</taxon>
        <taxon>Danionidae</taxon>
        <taxon>Danioninae</taxon>
        <taxon>Danio</taxon>
    </lineage>
</organism>
<name>S2539_DANRE</name>
<evidence type="ECO:0000250" key="1">
    <source>
        <dbReference type="UniProtKB" id="Q9BZJ4"/>
    </source>
</evidence>
<evidence type="ECO:0000255" key="2"/>
<evidence type="ECO:0000269" key="3">
    <source>
    </source>
</evidence>
<evidence type="ECO:0000305" key="4"/>
<feature type="chain" id="PRO_0000386652" description="Mitochondrial glutathione transporter SLC25A39">
    <location>
        <begin position="1"/>
        <end position="359"/>
    </location>
</feature>
<feature type="topological domain" description="Mitochondrial intermembrane" evidence="4">
    <location>
        <begin position="1"/>
        <end position="18"/>
    </location>
</feature>
<feature type="transmembrane region" description="Helical; Name=1" evidence="2">
    <location>
        <begin position="19"/>
        <end position="39"/>
    </location>
</feature>
<feature type="topological domain" description="Mitochondrial matrix" evidence="4">
    <location>
        <begin position="40"/>
        <end position="119"/>
    </location>
</feature>
<feature type="transmembrane region" description="Helical; Name=2" evidence="2">
    <location>
        <begin position="120"/>
        <end position="140"/>
    </location>
</feature>
<feature type="topological domain" description="Mitochondrial intermembrane" evidence="4">
    <location>
        <begin position="141"/>
        <end position="162"/>
    </location>
</feature>
<feature type="transmembrane region" description="Helical; Name=3" evidence="2">
    <location>
        <begin position="163"/>
        <end position="183"/>
    </location>
</feature>
<feature type="topological domain" description="Mitochondrial matrix" evidence="4">
    <location>
        <begin position="184"/>
        <end position="212"/>
    </location>
</feature>
<feature type="transmembrane region" description="Helical; Name=4" evidence="2">
    <location>
        <begin position="213"/>
        <end position="233"/>
    </location>
</feature>
<feature type="topological domain" description="Mitochondrial intermembrane" evidence="4">
    <location>
        <begin position="234"/>
        <end position="253"/>
    </location>
</feature>
<feature type="transmembrane region" description="Helical; Name=5" evidence="2">
    <location>
        <begin position="254"/>
        <end position="274"/>
    </location>
</feature>
<feature type="topological domain" description="Mitochondrial matrix" evidence="4">
    <location>
        <begin position="275"/>
        <end position="316"/>
    </location>
</feature>
<feature type="transmembrane region" description="Helical; Name=6" evidence="2">
    <location>
        <begin position="317"/>
        <end position="337"/>
    </location>
</feature>
<feature type="topological domain" description="Mitochondrial intermembrane" evidence="4">
    <location>
        <begin position="338"/>
        <end position="359"/>
    </location>
</feature>
<feature type="repeat" description="Solcar 1">
    <location>
        <begin position="13"/>
        <end position="149"/>
    </location>
</feature>
<feature type="repeat" description="Solcar 2">
    <location>
        <begin position="157"/>
        <end position="241"/>
    </location>
</feature>
<feature type="repeat" description="Solcar 3">
    <location>
        <begin position="251"/>
        <end position="346"/>
    </location>
</feature>
<feature type="binding site" evidence="1">
    <location>
        <position position="72"/>
    </location>
    <ligand>
        <name>[2Fe-2S] cluster</name>
        <dbReference type="ChEBI" id="CHEBI:190135"/>
    </ligand>
</feature>
<feature type="binding site" evidence="1">
    <location>
        <position position="76"/>
    </location>
    <ligand>
        <name>[2Fe-2S] cluster</name>
        <dbReference type="ChEBI" id="CHEBI:190135"/>
    </ligand>
</feature>
<feature type="binding site" evidence="1">
    <location>
        <position position="86"/>
    </location>
    <ligand>
        <name>[2Fe-2S] cluster</name>
        <dbReference type="ChEBI" id="CHEBI:190135"/>
    </ligand>
</feature>
<feature type="binding site" evidence="1">
    <location>
        <position position="92"/>
    </location>
    <ligand>
        <name>[2Fe-2S] cluster</name>
        <dbReference type="ChEBI" id="CHEBI:190135"/>
    </ligand>
</feature>
<protein>
    <recommendedName>
        <fullName evidence="4">Mitochondrial glutathione transporter SLC25A39</fullName>
    </recommendedName>
    <alternativeName>
        <fullName evidence="4">Solute carrier family 25 member 39</fullName>
    </alternativeName>
</protein>
<proteinExistence type="evidence at transcript level"/>
<keyword id="KW-0001">2Fe-2S</keyword>
<keyword id="KW-0350">Heme biosynthesis</keyword>
<keyword id="KW-0408">Iron</keyword>
<keyword id="KW-0411">Iron-sulfur</keyword>
<keyword id="KW-0472">Membrane</keyword>
<keyword id="KW-0479">Metal-binding</keyword>
<keyword id="KW-0496">Mitochondrion</keyword>
<keyword id="KW-0999">Mitochondrion inner membrane</keyword>
<keyword id="KW-1185">Reference proteome</keyword>
<keyword id="KW-0677">Repeat</keyword>
<keyword id="KW-0812">Transmembrane</keyword>
<keyword id="KW-1133">Transmembrane helix</keyword>
<keyword id="KW-0813">Transport</keyword>
<comment type="function">
    <text evidence="1 3">Mitochondrial transporter required for glutathione import into mitochondria. Glutathione, which plays key roles in oxidative metabolism, is produced exclusively in the cytosol and is imported in many organelles. Mitochondrial glutathione is required for the activity and stability of proteins containing iron-sulfur clusters, as well as erythropoiesis (By similarity). Involved in the early steps of heme biosynthesis (PubMed:19656490).</text>
</comment>
<comment type="catalytic activity">
    <reaction evidence="1">
        <text>glutathione(in) = glutathione(out)</text>
        <dbReference type="Rhea" id="RHEA:74819"/>
        <dbReference type="ChEBI" id="CHEBI:57925"/>
    </reaction>
</comment>
<comment type="activity regulation">
    <text evidence="1">The activity of SLC25A39 is regulated by levels of mitochondrial glutathione via its ability to bind [2Fe-2S] iron-sulfur cluster. Upon physiological levels of mitochondrial glutathione, glutathione prevents iron-sulfur-binding to SLC25A39 promoting cleavage and degradation by AFG3L2. Upon depletion of mitochondrial glutathione, SLC25A39 binds iron-sulfur, preventing cleavage and degradation by AFG3L2.</text>
</comment>
<comment type="subcellular location">
    <subcellularLocation>
        <location evidence="1">Mitochondrion inner membrane</location>
        <topology evidence="2">Multi-pass membrane protein</topology>
    </subcellularLocation>
</comment>
<comment type="PTM">
    <text evidence="1">Cleaved and degraded by AFG3L2; degradation by AFG3L2 is regulated by the ability of SLC25A39 to bind iron-sulfur. In absence of mitochondrial glutathione, SLC25A39 binds iron-sulfur, preventing cleavage and degradation by AFG3L2. The presence of mitochondrial glutathione prevents iron-sulfur-binding to SLC25A39, promoting cleavage and degradation by AFG3L2.</text>
</comment>
<comment type="disruption phenotype">
    <text evidence="3">Morpholino knockdown of the protein results in profound anemia without affecting erythroid specification. No porphyric phenotype detected.</text>
</comment>
<comment type="similarity">
    <text evidence="4">Belongs to the mitochondrial carrier (TC 2.A.29) family.</text>
</comment>